<sequence>MQPMARGIQRSVTMIEAMVQALQYEFMQNAIVASLLVSLACGLIGSFIVINRMVFISGGVAHAAYGGIGLGYYFAFNPLWGAFVFSLVMALAMGWVARKYQQRSDTLIGVMWALGMAIGIMLIDLTKGYKADVASYLFGSILTVPRQELWLMAGLDMLIIILLFLLYKEFLAISFDPVYATTRNLPVDILYLTLVAAIALTVVMVMQLVGLIMVIALLSIPAAIAGQYVRDVPQMMAVASGLGMVFCGVGLALSYSFNLSSGATIILVASIAYLISLAFRR</sequence>
<feature type="chain" id="PRO_0000171179" description="Uncharacterized membrane protein slr2045">
    <location>
        <begin position="1"/>
        <end position="281"/>
    </location>
</feature>
<feature type="transmembrane region" description="Helical" evidence="1">
    <location>
        <begin position="30"/>
        <end position="50"/>
    </location>
</feature>
<feature type="transmembrane region" description="Helical" evidence="1">
    <location>
        <begin position="54"/>
        <end position="74"/>
    </location>
</feature>
<feature type="transmembrane region" description="Helical" evidence="1">
    <location>
        <begin position="76"/>
        <end position="96"/>
    </location>
</feature>
<feature type="transmembrane region" description="Helical" evidence="1">
    <location>
        <begin position="106"/>
        <end position="126"/>
    </location>
</feature>
<feature type="transmembrane region" description="Helical" evidence="1">
    <location>
        <begin position="153"/>
        <end position="173"/>
    </location>
</feature>
<feature type="transmembrane region" description="Helical" evidence="1">
    <location>
        <begin position="198"/>
        <end position="218"/>
    </location>
</feature>
<feature type="transmembrane region" description="Helical" evidence="1">
    <location>
        <begin position="235"/>
        <end position="255"/>
    </location>
</feature>
<feature type="transmembrane region" description="Helical" evidence="1">
    <location>
        <begin position="259"/>
        <end position="279"/>
    </location>
</feature>
<comment type="subcellular location">
    <subcellularLocation>
        <location evidence="2">Cell membrane</location>
        <topology evidence="2">Multi-pass membrane protein</topology>
    </subcellularLocation>
</comment>
<comment type="similarity">
    <text evidence="2">Belongs to the ABC-3 integral membrane protein family.</text>
</comment>
<name>Y2045_SYNY3</name>
<keyword id="KW-1003">Cell membrane</keyword>
<keyword id="KW-0472">Membrane</keyword>
<keyword id="KW-1185">Reference proteome</keyword>
<keyword id="KW-0812">Transmembrane</keyword>
<keyword id="KW-1133">Transmembrane helix</keyword>
<keyword id="KW-0813">Transport</keyword>
<proteinExistence type="inferred from homology"/>
<dbReference type="EMBL" id="BA000022">
    <property type="protein sequence ID" value="BAA17112.1"/>
    <property type="molecule type" value="Genomic_DNA"/>
</dbReference>
<dbReference type="PIR" id="S75198">
    <property type="entry name" value="S75198"/>
</dbReference>
<dbReference type="SMR" id="P73087"/>
<dbReference type="FunCoup" id="P73087">
    <property type="interactions" value="103"/>
</dbReference>
<dbReference type="IntAct" id="P73087">
    <property type="interactions" value="1"/>
</dbReference>
<dbReference type="STRING" id="1148.gene:10497973"/>
<dbReference type="PaxDb" id="1148-1652188"/>
<dbReference type="EnsemblBacteria" id="BAA17112">
    <property type="protein sequence ID" value="BAA17112"/>
    <property type="gene ID" value="BAA17112"/>
</dbReference>
<dbReference type="KEGG" id="syn:slr2045"/>
<dbReference type="eggNOG" id="COG1108">
    <property type="taxonomic scope" value="Bacteria"/>
</dbReference>
<dbReference type="InParanoid" id="P73087"/>
<dbReference type="PhylomeDB" id="P73087"/>
<dbReference type="Proteomes" id="UP000001425">
    <property type="component" value="Chromosome"/>
</dbReference>
<dbReference type="GO" id="GO:0043190">
    <property type="term" value="C:ATP-binding cassette (ABC) transporter complex"/>
    <property type="evidence" value="ECO:0007669"/>
    <property type="project" value="InterPro"/>
</dbReference>
<dbReference type="GO" id="GO:0005886">
    <property type="term" value="C:plasma membrane"/>
    <property type="evidence" value="ECO:0000318"/>
    <property type="project" value="GO_Central"/>
</dbReference>
<dbReference type="GO" id="GO:0010043">
    <property type="term" value="P:response to zinc ion"/>
    <property type="evidence" value="ECO:0000318"/>
    <property type="project" value="GO_Central"/>
</dbReference>
<dbReference type="GO" id="GO:0055085">
    <property type="term" value="P:transmembrane transport"/>
    <property type="evidence" value="ECO:0007669"/>
    <property type="project" value="InterPro"/>
</dbReference>
<dbReference type="CDD" id="cd06550">
    <property type="entry name" value="TM_ABC_iron-siderophores_like"/>
    <property type="match status" value="1"/>
</dbReference>
<dbReference type="Gene3D" id="1.10.3470.10">
    <property type="entry name" value="ABC transporter involved in vitamin B12 uptake, BtuC"/>
    <property type="match status" value="1"/>
</dbReference>
<dbReference type="InterPro" id="IPR037294">
    <property type="entry name" value="ABC_BtuC-like"/>
</dbReference>
<dbReference type="InterPro" id="IPR001626">
    <property type="entry name" value="ABC_TroCD"/>
</dbReference>
<dbReference type="PANTHER" id="PTHR30477">
    <property type="entry name" value="ABC-TRANSPORTER METAL-BINDING PROTEIN"/>
    <property type="match status" value="1"/>
</dbReference>
<dbReference type="PANTHER" id="PTHR30477:SF18">
    <property type="entry name" value="METAL TRANSPORT SYSTEM MEMBRANE PROTEIN CT_417-RELATED"/>
    <property type="match status" value="1"/>
</dbReference>
<dbReference type="Pfam" id="PF00950">
    <property type="entry name" value="ABC-3"/>
    <property type="match status" value="1"/>
</dbReference>
<dbReference type="SUPFAM" id="SSF81345">
    <property type="entry name" value="ABC transporter involved in vitamin B12 uptake, BtuC"/>
    <property type="match status" value="1"/>
</dbReference>
<accession>P73087</accession>
<protein>
    <recommendedName>
        <fullName>Uncharacterized membrane protein slr2045</fullName>
    </recommendedName>
</protein>
<reference key="1">
    <citation type="journal article" date="1996" name="DNA Res.">
        <title>Sequence analysis of the genome of the unicellular cyanobacterium Synechocystis sp. strain PCC6803. II. Sequence determination of the entire genome and assignment of potential protein-coding regions.</title>
        <authorList>
            <person name="Kaneko T."/>
            <person name="Sato S."/>
            <person name="Kotani H."/>
            <person name="Tanaka A."/>
            <person name="Asamizu E."/>
            <person name="Nakamura Y."/>
            <person name="Miyajima N."/>
            <person name="Hirosawa M."/>
            <person name="Sugiura M."/>
            <person name="Sasamoto S."/>
            <person name="Kimura T."/>
            <person name="Hosouchi T."/>
            <person name="Matsuno A."/>
            <person name="Muraki A."/>
            <person name="Nakazaki N."/>
            <person name="Naruo K."/>
            <person name="Okumura S."/>
            <person name="Shimpo S."/>
            <person name="Takeuchi C."/>
            <person name="Wada T."/>
            <person name="Watanabe A."/>
            <person name="Yamada M."/>
            <person name="Yasuda M."/>
            <person name="Tabata S."/>
        </authorList>
    </citation>
    <scope>NUCLEOTIDE SEQUENCE [LARGE SCALE GENOMIC DNA]</scope>
    <source>
        <strain>ATCC 27184 / PCC 6803 / Kazusa</strain>
    </source>
</reference>
<gene>
    <name type="ordered locus">slr2045</name>
</gene>
<evidence type="ECO:0000255" key="1"/>
<evidence type="ECO:0000305" key="2"/>
<organism>
    <name type="scientific">Synechocystis sp. (strain ATCC 27184 / PCC 6803 / Kazusa)</name>
    <dbReference type="NCBI Taxonomy" id="1111708"/>
    <lineage>
        <taxon>Bacteria</taxon>
        <taxon>Bacillati</taxon>
        <taxon>Cyanobacteriota</taxon>
        <taxon>Cyanophyceae</taxon>
        <taxon>Synechococcales</taxon>
        <taxon>Merismopediaceae</taxon>
        <taxon>Synechocystis</taxon>
    </lineage>
</organism>